<protein>
    <recommendedName>
        <fullName evidence="1">UDP-N-acetylenolpyruvoylglucosamine reductase</fullName>
        <ecNumber evidence="1">1.3.1.98</ecNumber>
    </recommendedName>
    <alternativeName>
        <fullName evidence="1">UDP-N-acetylmuramate dehydrogenase</fullName>
    </alternativeName>
</protein>
<reference key="1">
    <citation type="journal article" date="2005" name="Genome Res.">
        <title>Genome sequence of Blochmannia pennsylvanicus indicates parallel evolutionary trends among bacterial mutualists of insects.</title>
        <authorList>
            <person name="Degnan P.H."/>
            <person name="Lazarus A.B."/>
            <person name="Wernegreen J.J."/>
        </authorList>
    </citation>
    <scope>NUCLEOTIDE SEQUENCE [LARGE SCALE GENOMIC DNA]</scope>
    <source>
        <strain>BPEN</strain>
    </source>
</reference>
<name>MURB_BLOPB</name>
<accession>Q493L3</accession>
<organism>
    <name type="scientific">Blochmanniella pennsylvanica (strain BPEN)</name>
    <dbReference type="NCBI Taxonomy" id="291272"/>
    <lineage>
        <taxon>Bacteria</taxon>
        <taxon>Pseudomonadati</taxon>
        <taxon>Pseudomonadota</taxon>
        <taxon>Gammaproteobacteria</taxon>
        <taxon>Enterobacterales</taxon>
        <taxon>Enterobacteriaceae</taxon>
        <taxon>ant endosymbionts</taxon>
        <taxon>Candidatus Blochmanniella</taxon>
    </lineage>
</organism>
<sequence length="345" mass="39501">MYEHPFQLKSLNTFSVNAFAKSVVTAHHEHTLLKFWRKAYRKGKPVLILGGGSNILFLENYSGTILLNRIKGIFITENETAWQLHVGAGEKWDELVVHTIKKNIPGLENLACIPGYVGAAPIQNIGAYGVELSQICEYVDAIDLYSGKKIRFTCSECDFKYRDSIFRNCLEKYAIVSVGLRLCKKWKPILDYHELAHLEKFHITPRQIFNFIYIIRHKKLPDPVLVGNAGSFFKNPIIDIKTARCLFQIYPNMPYFYQKDGRIKLSAGWLIEYCQLKGYIFGEAAIYPKQALVLINSKKIATGTEIAALALYIYNKVADQFNIYLQPEVRLIGNYGEINPKKLFM</sequence>
<keyword id="KW-0131">Cell cycle</keyword>
<keyword id="KW-0132">Cell division</keyword>
<keyword id="KW-0133">Cell shape</keyword>
<keyword id="KW-0961">Cell wall biogenesis/degradation</keyword>
<keyword id="KW-0963">Cytoplasm</keyword>
<keyword id="KW-0274">FAD</keyword>
<keyword id="KW-0285">Flavoprotein</keyword>
<keyword id="KW-0521">NADP</keyword>
<keyword id="KW-0560">Oxidoreductase</keyword>
<keyword id="KW-0573">Peptidoglycan synthesis</keyword>
<keyword id="KW-1185">Reference proteome</keyword>
<feature type="chain" id="PRO_0000224667" description="UDP-N-acetylenolpyruvoylglucosamine reductase">
    <location>
        <begin position="1"/>
        <end position="345"/>
    </location>
</feature>
<feature type="domain" description="FAD-binding PCMH-type" evidence="1">
    <location>
        <begin position="16"/>
        <end position="185"/>
    </location>
</feature>
<feature type="active site" evidence="1">
    <location>
        <position position="162"/>
    </location>
</feature>
<feature type="active site" description="Proton donor" evidence="1">
    <location>
        <position position="231"/>
    </location>
</feature>
<feature type="active site" evidence="1">
    <location>
        <position position="328"/>
    </location>
</feature>
<evidence type="ECO:0000255" key="1">
    <source>
        <dbReference type="HAMAP-Rule" id="MF_00037"/>
    </source>
</evidence>
<comment type="function">
    <text evidence="1">Cell wall formation.</text>
</comment>
<comment type="catalytic activity">
    <reaction evidence="1">
        <text>UDP-N-acetyl-alpha-D-muramate + NADP(+) = UDP-N-acetyl-3-O-(1-carboxyvinyl)-alpha-D-glucosamine + NADPH + H(+)</text>
        <dbReference type="Rhea" id="RHEA:12248"/>
        <dbReference type="ChEBI" id="CHEBI:15378"/>
        <dbReference type="ChEBI" id="CHEBI:57783"/>
        <dbReference type="ChEBI" id="CHEBI:58349"/>
        <dbReference type="ChEBI" id="CHEBI:68483"/>
        <dbReference type="ChEBI" id="CHEBI:70757"/>
        <dbReference type="EC" id="1.3.1.98"/>
    </reaction>
</comment>
<comment type="cofactor">
    <cofactor evidence="1">
        <name>FAD</name>
        <dbReference type="ChEBI" id="CHEBI:57692"/>
    </cofactor>
</comment>
<comment type="pathway">
    <text evidence="1">Cell wall biogenesis; peptidoglycan biosynthesis.</text>
</comment>
<comment type="subcellular location">
    <subcellularLocation>
        <location evidence="1">Cytoplasm</location>
    </subcellularLocation>
</comment>
<comment type="similarity">
    <text evidence="1">Belongs to the MurB family.</text>
</comment>
<proteinExistence type="inferred from homology"/>
<dbReference type="EC" id="1.3.1.98" evidence="1"/>
<dbReference type="EMBL" id="CP000016">
    <property type="protein sequence ID" value="AAZ40827.1"/>
    <property type="molecule type" value="Genomic_DNA"/>
</dbReference>
<dbReference type="RefSeq" id="WP_011282734.1">
    <property type="nucleotide sequence ID" value="NC_007292.1"/>
</dbReference>
<dbReference type="SMR" id="Q493L3"/>
<dbReference type="STRING" id="291272.BPEN_189"/>
<dbReference type="KEGG" id="bpn:BPEN_189"/>
<dbReference type="eggNOG" id="COG0812">
    <property type="taxonomic scope" value="Bacteria"/>
</dbReference>
<dbReference type="HOGENOM" id="CLU_035304_0_0_6"/>
<dbReference type="OrthoDB" id="9804753at2"/>
<dbReference type="UniPathway" id="UPA00219"/>
<dbReference type="Proteomes" id="UP000007794">
    <property type="component" value="Chromosome"/>
</dbReference>
<dbReference type="GO" id="GO:0005829">
    <property type="term" value="C:cytosol"/>
    <property type="evidence" value="ECO:0007669"/>
    <property type="project" value="TreeGrafter"/>
</dbReference>
<dbReference type="GO" id="GO:0071949">
    <property type="term" value="F:FAD binding"/>
    <property type="evidence" value="ECO:0007669"/>
    <property type="project" value="InterPro"/>
</dbReference>
<dbReference type="GO" id="GO:0008762">
    <property type="term" value="F:UDP-N-acetylmuramate dehydrogenase activity"/>
    <property type="evidence" value="ECO:0007669"/>
    <property type="project" value="UniProtKB-UniRule"/>
</dbReference>
<dbReference type="GO" id="GO:0051301">
    <property type="term" value="P:cell division"/>
    <property type="evidence" value="ECO:0007669"/>
    <property type="project" value="UniProtKB-KW"/>
</dbReference>
<dbReference type="GO" id="GO:0071555">
    <property type="term" value="P:cell wall organization"/>
    <property type="evidence" value="ECO:0007669"/>
    <property type="project" value="UniProtKB-KW"/>
</dbReference>
<dbReference type="GO" id="GO:0009252">
    <property type="term" value="P:peptidoglycan biosynthetic process"/>
    <property type="evidence" value="ECO:0007669"/>
    <property type="project" value="UniProtKB-UniRule"/>
</dbReference>
<dbReference type="GO" id="GO:0008360">
    <property type="term" value="P:regulation of cell shape"/>
    <property type="evidence" value="ECO:0007669"/>
    <property type="project" value="UniProtKB-KW"/>
</dbReference>
<dbReference type="Gene3D" id="3.30.465.10">
    <property type="match status" value="1"/>
</dbReference>
<dbReference type="Gene3D" id="3.90.78.10">
    <property type="entry name" value="UDP-N-acetylenolpyruvoylglucosamine reductase, C-terminal domain"/>
    <property type="match status" value="1"/>
</dbReference>
<dbReference type="Gene3D" id="3.30.43.10">
    <property type="entry name" value="Uridine Diphospho-n-acetylenolpyruvylglucosamine Reductase, domain 2"/>
    <property type="match status" value="1"/>
</dbReference>
<dbReference type="HAMAP" id="MF_00037">
    <property type="entry name" value="MurB"/>
    <property type="match status" value="1"/>
</dbReference>
<dbReference type="InterPro" id="IPR016166">
    <property type="entry name" value="FAD-bd_PCMH"/>
</dbReference>
<dbReference type="InterPro" id="IPR036318">
    <property type="entry name" value="FAD-bd_PCMH-like_sf"/>
</dbReference>
<dbReference type="InterPro" id="IPR016167">
    <property type="entry name" value="FAD-bd_PCMH_sub1"/>
</dbReference>
<dbReference type="InterPro" id="IPR016169">
    <property type="entry name" value="FAD-bd_PCMH_sub2"/>
</dbReference>
<dbReference type="InterPro" id="IPR003170">
    <property type="entry name" value="MurB"/>
</dbReference>
<dbReference type="InterPro" id="IPR011601">
    <property type="entry name" value="MurB_C"/>
</dbReference>
<dbReference type="InterPro" id="IPR036635">
    <property type="entry name" value="MurB_C_sf"/>
</dbReference>
<dbReference type="InterPro" id="IPR006094">
    <property type="entry name" value="Oxid_FAD_bind_N"/>
</dbReference>
<dbReference type="NCBIfam" id="TIGR00179">
    <property type="entry name" value="murB"/>
    <property type="match status" value="1"/>
</dbReference>
<dbReference type="NCBIfam" id="NF000755">
    <property type="entry name" value="PRK00046.1"/>
    <property type="match status" value="1"/>
</dbReference>
<dbReference type="PANTHER" id="PTHR21071">
    <property type="entry name" value="UDP-N-ACETYLENOLPYRUVOYLGLUCOSAMINE REDUCTASE"/>
    <property type="match status" value="1"/>
</dbReference>
<dbReference type="PANTHER" id="PTHR21071:SF4">
    <property type="entry name" value="UDP-N-ACETYLENOLPYRUVOYLGLUCOSAMINE REDUCTASE"/>
    <property type="match status" value="1"/>
</dbReference>
<dbReference type="Pfam" id="PF01565">
    <property type="entry name" value="FAD_binding_4"/>
    <property type="match status" value="1"/>
</dbReference>
<dbReference type="Pfam" id="PF02873">
    <property type="entry name" value="MurB_C"/>
    <property type="match status" value="1"/>
</dbReference>
<dbReference type="SUPFAM" id="SSF56176">
    <property type="entry name" value="FAD-binding/transporter-associated domain-like"/>
    <property type="match status" value="1"/>
</dbReference>
<dbReference type="SUPFAM" id="SSF56194">
    <property type="entry name" value="Uridine diphospho-N-Acetylenolpyruvylglucosamine reductase, MurB, C-terminal domain"/>
    <property type="match status" value="1"/>
</dbReference>
<dbReference type="PROSITE" id="PS51387">
    <property type="entry name" value="FAD_PCMH"/>
    <property type="match status" value="1"/>
</dbReference>
<gene>
    <name evidence="1" type="primary">murB</name>
    <name type="ordered locus">BPEN_189</name>
</gene>